<protein>
    <recommendedName>
        <fullName evidence="1">Dihydroxy-acid dehydratase</fullName>
        <shortName evidence="1">DAD</shortName>
        <ecNumber evidence="1">4.2.1.9</ecNumber>
    </recommendedName>
</protein>
<dbReference type="EC" id="4.2.1.9" evidence="1"/>
<dbReference type="EMBL" id="CP000097">
    <property type="protein sequence ID" value="ABB26186.1"/>
    <property type="molecule type" value="Genomic_DNA"/>
</dbReference>
<dbReference type="RefSeq" id="WP_011360013.1">
    <property type="nucleotide sequence ID" value="NC_007513.1"/>
</dbReference>
<dbReference type="SMR" id="Q3AXL0"/>
<dbReference type="STRING" id="316279.Syncc9902_1222"/>
<dbReference type="KEGG" id="sye:Syncc9902_1222"/>
<dbReference type="eggNOG" id="COG0129">
    <property type="taxonomic scope" value="Bacteria"/>
</dbReference>
<dbReference type="HOGENOM" id="CLU_014271_4_2_3"/>
<dbReference type="OrthoDB" id="9807077at2"/>
<dbReference type="UniPathway" id="UPA00047">
    <property type="reaction ID" value="UER00057"/>
</dbReference>
<dbReference type="UniPathway" id="UPA00049">
    <property type="reaction ID" value="UER00061"/>
</dbReference>
<dbReference type="Proteomes" id="UP000002712">
    <property type="component" value="Chromosome"/>
</dbReference>
<dbReference type="GO" id="GO:0051537">
    <property type="term" value="F:2 iron, 2 sulfur cluster binding"/>
    <property type="evidence" value="ECO:0007669"/>
    <property type="project" value="UniProtKB-UniRule"/>
</dbReference>
<dbReference type="GO" id="GO:0004160">
    <property type="term" value="F:dihydroxy-acid dehydratase activity"/>
    <property type="evidence" value="ECO:0007669"/>
    <property type="project" value="UniProtKB-UniRule"/>
</dbReference>
<dbReference type="GO" id="GO:0000287">
    <property type="term" value="F:magnesium ion binding"/>
    <property type="evidence" value="ECO:0007669"/>
    <property type="project" value="UniProtKB-UniRule"/>
</dbReference>
<dbReference type="GO" id="GO:0009097">
    <property type="term" value="P:isoleucine biosynthetic process"/>
    <property type="evidence" value="ECO:0007669"/>
    <property type="project" value="UniProtKB-UniRule"/>
</dbReference>
<dbReference type="GO" id="GO:0009099">
    <property type="term" value="P:L-valine biosynthetic process"/>
    <property type="evidence" value="ECO:0007669"/>
    <property type="project" value="UniProtKB-UniRule"/>
</dbReference>
<dbReference type="FunFam" id="3.50.30.80:FF:000001">
    <property type="entry name" value="Dihydroxy-acid dehydratase"/>
    <property type="match status" value="1"/>
</dbReference>
<dbReference type="Gene3D" id="3.50.30.80">
    <property type="entry name" value="IlvD/EDD C-terminal domain-like"/>
    <property type="match status" value="1"/>
</dbReference>
<dbReference type="HAMAP" id="MF_00012">
    <property type="entry name" value="IlvD"/>
    <property type="match status" value="1"/>
</dbReference>
<dbReference type="InterPro" id="IPR050165">
    <property type="entry name" value="DHAD_IlvD/Edd"/>
</dbReference>
<dbReference type="InterPro" id="IPR042096">
    <property type="entry name" value="Dihydro-acid_dehy_C"/>
</dbReference>
<dbReference type="InterPro" id="IPR004404">
    <property type="entry name" value="DihydroxyA_deHydtase"/>
</dbReference>
<dbReference type="InterPro" id="IPR020558">
    <property type="entry name" value="DiOHA_6PGluconate_deHydtase_CS"/>
</dbReference>
<dbReference type="InterPro" id="IPR056740">
    <property type="entry name" value="ILV_EDD_C"/>
</dbReference>
<dbReference type="InterPro" id="IPR000581">
    <property type="entry name" value="ILV_EDD_N"/>
</dbReference>
<dbReference type="InterPro" id="IPR037237">
    <property type="entry name" value="IlvD/EDD_N"/>
</dbReference>
<dbReference type="NCBIfam" id="TIGR00110">
    <property type="entry name" value="ilvD"/>
    <property type="match status" value="1"/>
</dbReference>
<dbReference type="NCBIfam" id="NF002068">
    <property type="entry name" value="PRK00911.1"/>
    <property type="match status" value="1"/>
</dbReference>
<dbReference type="PANTHER" id="PTHR21000">
    <property type="entry name" value="DIHYDROXY-ACID DEHYDRATASE DAD"/>
    <property type="match status" value="1"/>
</dbReference>
<dbReference type="PANTHER" id="PTHR21000:SF5">
    <property type="entry name" value="DIHYDROXY-ACID DEHYDRATASE, MITOCHONDRIAL"/>
    <property type="match status" value="1"/>
</dbReference>
<dbReference type="Pfam" id="PF24877">
    <property type="entry name" value="ILV_EDD_C"/>
    <property type="match status" value="1"/>
</dbReference>
<dbReference type="Pfam" id="PF00920">
    <property type="entry name" value="ILVD_EDD_N"/>
    <property type="match status" value="1"/>
</dbReference>
<dbReference type="SUPFAM" id="SSF143975">
    <property type="entry name" value="IlvD/EDD N-terminal domain-like"/>
    <property type="match status" value="1"/>
</dbReference>
<dbReference type="SUPFAM" id="SSF52016">
    <property type="entry name" value="LeuD/IlvD-like"/>
    <property type="match status" value="1"/>
</dbReference>
<dbReference type="PROSITE" id="PS00886">
    <property type="entry name" value="ILVD_EDD_1"/>
    <property type="match status" value="1"/>
</dbReference>
<dbReference type="PROSITE" id="PS00887">
    <property type="entry name" value="ILVD_EDD_2"/>
    <property type="match status" value="1"/>
</dbReference>
<evidence type="ECO:0000255" key="1">
    <source>
        <dbReference type="HAMAP-Rule" id="MF_00012"/>
    </source>
</evidence>
<reference key="1">
    <citation type="submission" date="2005-08" db="EMBL/GenBank/DDBJ databases">
        <title>Complete sequence of Synechococcus sp. CC9902.</title>
        <authorList>
            <person name="Copeland A."/>
            <person name="Lucas S."/>
            <person name="Lapidus A."/>
            <person name="Barry K."/>
            <person name="Detter J.C."/>
            <person name="Glavina T."/>
            <person name="Hammon N."/>
            <person name="Israni S."/>
            <person name="Pitluck S."/>
            <person name="Martinez M."/>
            <person name="Schmutz J."/>
            <person name="Larimer F."/>
            <person name="Land M."/>
            <person name="Kyrpides N."/>
            <person name="Ivanova N."/>
            <person name="Richardson P."/>
        </authorList>
    </citation>
    <scope>NUCLEOTIDE SEQUENCE [LARGE SCALE GENOMIC DNA]</scope>
    <source>
        <strain>CC9902</strain>
    </source>
</reference>
<accession>Q3AXL0</accession>
<proteinExistence type="inferred from homology"/>
<keyword id="KW-0001">2Fe-2S</keyword>
<keyword id="KW-0028">Amino-acid biosynthesis</keyword>
<keyword id="KW-0100">Branched-chain amino acid biosynthesis</keyword>
<keyword id="KW-0408">Iron</keyword>
<keyword id="KW-0411">Iron-sulfur</keyword>
<keyword id="KW-0456">Lyase</keyword>
<keyword id="KW-0460">Magnesium</keyword>
<keyword id="KW-0479">Metal-binding</keyword>
<keyword id="KW-1185">Reference proteome</keyword>
<feature type="chain" id="PRO_1000001076" description="Dihydroxy-acid dehydratase">
    <location>
        <begin position="1"/>
        <end position="557"/>
    </location>
</feature>
<feature type="active site" description="Proton acceptor" evidence="1">
    <location>
        <position position="470"/>
    </location>
</feature>
<feature type="binding site" evidence="1">
    <location>
        <position position="47"/>
    </location>
    <ligand>
        <name>[2Fe-2S] cluster</name>
        <dbReference type="ChEBI" id="CHEBI:190135"/>
    </ligand>
</feature>
<feature type="binding site" evidence="1">
    <location>
        <position position="79"/>
    </location>
    <ligand>
        <name>Mg(2+)</name>
        <dbReference type="ChEBI" id="CHEBI:18420"/>
    </ligand>
</feature>
<feature type="binding site" evidence="1">
    <location>
        <position position="120"/>
    </location>
    <ligand>
        <name>[2Fe-2S] cluster</name>
        <dbReference type="ChEBI" id="CHEBI:190135"/>
    </ligand>
</feature>
<feature type="binding site" evidence="1">
    <location>
        <position position="121"/>
    </location>
    <ligand>
        <name>Mg(2+)</name>
        <dbReference type="ChEBI" id="CHEBI:18420"/>
    </ligand>
</feature>
<feature type="binding site" description="via carbamate group" evidence="1">
    <location>
        <position position="122"/>
    </location>
    <ligand>
        <name>Mg(2+)</name>
        <dbReference type="ChEBI" id="CHEBI:18420"/>
    </ligand>
</feature>
<feature type="binding site" evidence="1">
    <location>
        <position position="192"/>
    </location>
    <ligand>
        <name>[2Fe-2S] cluster</name>
        <dbReference type="ChEBI" id="CHEBI:190135"/>
    </ligand>
</feature>
<feature type="binding site" evidence="1">
    <location>
        <position position="444"/>
    </location>
    <ligand>
        <name>Mg(2+)</name>
        <dbReference type="ChEBI" id="CHEBI:18420"/>
    </ligand>
</feature>
<feature type="modified residue" description="N6-carboxylysine" evidence="1">
    <location>
        <position position="122"/>
    </location>
</feature>
<name>ILVD_SYNS9</name>
<gene>
    <name evidence="1" type="primary">ilvD</name>
    <name type="ordered locus">Syncc9902_1222</name>
</gene>
<comment type="function">
    <text evidence="1">Functions in the biosynthesis of branched-chain amino acids. Catalyzes the dehydration of (2R,3R)-2,3-dihydroxy-3-methylpentanoate (2,3-dihydroxy-3-methylvalerate) into 2-oxo-3-methylpentanoate (2-oxo-3-methylvalerate) and of (2R)-2,3-dihydroxy-3-methylbutanoate (2,3-dihydroxyisovalerate) into 2-oxo-3-methylbutanoate (2-oxoisovalerate), the penultimate precursor to L-isoleucine and L-valine, respectively.</text>
</comment>
<comment type="catalytic activity">
    <reaction evidence="1">
        <text>(2R)-2,3-dihydroxy-3-methylbutanoate = 3-methyl-2-oxobutanoate + H2O</text>
        <dbReference type="Rhea" id="RHEA:24809"/>
        <dbReference type="ChEBI" id="CHEBI:11851"/>
        <dbReference type="ChEBI" id="CHEBI:15377"/>
        <dbReference type="ChEBI" id="CHEBI:49072"/>
        <dbReference type="EC" id="4.2.1.9"/>
    </reaction>
    <physiologicalReaction direction="left-to-right" evidence="1">
        <dbReference type="Rhea" id="RHEA:24810"/>
    </physiologicalReaction>
</comment>
<comment type="catalytic activity">
    <reaction evidence="1">
        <text>(2R,3R)-2,3-dihydroxy-3-methylpentanoate = (S)-3-methyl-2-oxopentanoate + H2O</text>
        <dbReference type="Rhea" id="RHEA:27694"/>
        <dbReference type="ChEBI" id="CHEBI:15377"/>
        <dbReference type="ChEBI" id="CHEBI:35146"/>
        <dbReference type="ChEBI" id="CHEBI:49258"/>
        <dbReference type="EC" id="4.2.1.9"/>
    </reaction>
    <physiologicalReaction direction="left-to-right" evidence="1">
        <dbReference type="Rhea" id="RHEA:27695"/>
    </physiologicalReaction>
</comment>
<comment type="cofactor">
    <cofactor evidence="1">
        <name>[2Fe-2S] cluster</name>
        <dbReference type="ChEBI" id="CHEBI:190135"/>
    </cofactor>
    <text evidence="1">Binds 1 [2Fe-2S] cluster per subunit. This cluster acts as a Lewis acid cofactor.</text>
</comment>
<comment type="cofactor">
    <cofactor evidence="1">
        <name>Mg(2+)</name>
        <dbReference type="ChEBI" id="CHEBI:18420"/>
    </cofactor>
</comment>
<comment type="pathway">
    <text evidence="1">Amino-acid biosynthesis; L-isoleucine biosynthesis; L-isoleucine from 2-oxobutanoate: step 3/4.</text>
</comment>
<comment type="pathway">
    <text evidence="1">Amino-acid biosynthesis; L-valine biosynthesis; L-valine from pyruvate: step 3/4.</text>
</comment>
<comment type="subunit">
    <text evidence="1">Homodimer.</text>
</comment>
<comment type="similarity">
    <text evidence="1">Belongs to the IlvD/Edd family.</text>
</comment>
<organism>
    <name type="scientific">Synechococcus sp. (strain CC9902)</name>
    <dbReference type="NCBI Taxonomy" id="316279"/>
    <lineage>
        <taxon>Bacteria</taxon>
        <taxon>Bacillati</taxon>
        <taxon>Cyanobacteriota</taxon>
        <taxon>Cyanophyceae</taxon>
        <taxon>Synechococcales</taxon>
        <taxon>Synechococcaceae</taxon>
        <taxon>Synechococcus</taxon>
    </lineage>
</organism>
<sequence>MLRSDAVTKGIQRSPNRAMLRAVGFGDADFGKPILGIANGYSTITPCNIGLDVLAKRAEEAARLAGGMPQMFGTITVSDGISMGTEGMKYSLVSREVIADAIETACNGQSMDGVLAVGGCDKNMPGAMLAMARMNIPSVFVYGGTIKPGKLGGCDLTVVSAFEAVGQITSGKIDEEQLTAVEKNACPGAGSCGGMFTANTMSAAIETMGLSLPYSSTMAAEDQEKADSAARSAEVLVDAVKANIRPLDLLTTEAFENAISVIMAVGGSTNAVLHLLAIARTAGVDLSIDDFERIRQRVPVICDLKPSGRFVTVDLHNAGGIPQVMKLLLDAGLLHGDCQTVEGKSLNELLADVPSEPPADQEVIRPLTNPMYSKGHLAILKGNLAIEGSVAKISGVKTPVLTGPARVFESEEDCLASILEKKINAGDVVVIRYEGPVGGPGMREMLAPTSAIVGQGLGDKVALITDGRFSGGTYGLVVGHVAPEAAVGGTIGLVQEGDSITVDANQLLLQLNVDETELAKRRAAWSKPKPRYTTGILGKYARLVSTSSKGAVTDQPD</sequence>